<reference key="1">
    <citation type="journal article" date="2008" name="J. Bacteriol.">
        <title>Comparative genome analysis of 'Candidatus Phytoplasma australiense' (subgroup tuf-Australia I; rp-A) and 'Ca. Phytoplasma asteris' strains OY-M and AY-WB.</title>
        <authorList>
            <person name="Tran-Nguyen L.T."/>
            <person name="Kube M."/>
            <person name="Schneider B."/>
            <person name="Reinhardt R."/>
            <person name="Gibb K.S."/>
        </authorList>
    </citation>
    <scope>NUCLEOTIDE SEQUENCE [LARGE SCALE GENOMIC DNA]</scope>
</reference>
<keyword id="KW-1185">Reference proteome</keyword>
<keyword id="KW-0678">Repressor</keyword>
<keyword id="KW-0346">Stress response</keyword>
<keyword id="KW-0804">Transcription</keyword>
<keyword id="KW-0805">Transcription regulation</keyword>
<organism>
    <name type="scientific">Phytoplasma australiense</name>
    <dbReference type="NCBI Taxonomy" id="59748"/>
    <lineage>
        <taxon>Bacteria</taxon>
        <taxon>Bacillati</taxon>
        <taxon>Mycoplasmatota</taxon>
        <taxon>Mollicutes</taxon>
        <taxon>Acholeplasmatales</taxon>
        <taxon>Acholeplasmataceae</taxon>
        <taxon>Candidatus Phytoplasma</taxon>
        <taxon>16SrXII (Stolbur group)</taxon>
    </lineage>
</organism>
<feature type="chain" id="PRO_1000117111" description="Heat-inducible transcription repressor HrcA">
    <location>
        <begin position="1"/>
        <end position="340"/>
    </location>
</feature>
<dbReference type="EMBL" id="AM422018">
    <property type="protein sequence ID" value="CAM11891.1"/>
    <property type="molecule type" value="Genomic_DNA"/>
</dbReference>
<dbReference type="SMR" id="B1VAB8"/>
<dbReference type="STRING" id="59748.PA0557"/>
<dbReference type="KEGG" id="pal:PA0557"/>
<dbReference type="eggNOG" id="COG1420">
    <property type="taxonomic scope" value="Bacteria"/>
</dbReference>
<dbReference type="Proteomes" id="UP000008323">
    <property type="component" value="Chromosome"/>
</dbReference>
<dbReference type="GO" id="GO:0003677">
    <property type="term" value="F:DNA binding"/>
    <property type="evidence" value="ECO:0007669"/>
    <property type="project" value="InterPro"/>
</dbReference>
<dbReference type="GO" id="GO:0045892">
    <property type="term" value="P:negative regulation of DNA-templated transcription"/>
    <property type="evidence" value="ECO:0007669"/>
    <property type="project" value="UniProtKB-UniRule"/>
</dbReference>
<dbReference type="Gene3D" id="3.30.450.40">
    <property type="match status" value="1"/>
</dbReference>
<dbReference type="Gene3D" id="3.30.390.60">
    <property type="entry name" value="Heat-inducible transcription repressor hrca homolog, domain 3"/>
    <property type="match status" value="1"/>
</dbReference>
<dbReference type="Gene3D" id="1.10.10.10">
    <property type="entry name" value="Winged helix-like DNA-binding domain superfamily/Winged helix DNA-binding domain"/>
    <property type="match status" value="1"/>
</dbReference>
<dbReference type="HAMAP" id="MF_00081">
    <property type="entry name" value="HrcA"/>
    <property type="match status" value="1"/>
</dbReference>
<dbReference type="InterPro" id="IPR029016">
    <property type="entry name" value="GAF-like_dom_sf"/>
</dbReference>
<dbReference type="InterPro" id="IPR002571">
    <property type="entry name" value="HrcA"/>
</dbReference>
<dbReference type="InterPro" id="IPR021153">
    <property type="entry name" value="HrcA_C"/>
</dbReference>
<dbReference type="InterPro" id="IPR036388">
    <property type="entry name" value="WH-like_DNA-bd_sf"/>
</dbReference>
<dbReference type="InterPro" id="IPR036390">
    <property type="entry name" value="WH_DNA-bd_sf"/>
</dbReference>
<dbReference type="InterPro" id="IPR023120">
    <property type="entry name" value="WHTH_transcript_rep_HrcA_IDD"/>
</dbReference>
<dbReference type="NCBIfam" id="TIGR00331">
    <property type="entry name" value="hrcA"/>
    <property type="match status" value="1"/>
</dbReference>
<dbReference type="PANTHER" id="PTHR34824">
    <property type="entry name" value="HEAT-INDUCIBLE TRANSCRIPTION REPRESSOR HRCA"/>
    <property type="match status" value="1"/>
</dbReference>
<dbReference type="PANTHER" id="PTHR34824:SF1">
    <property type="entry name" value="HEAT-INDUCIBLE TRANSCRIPTION REPRESSOR HRCA"/>
    <property type="match status" value="1"/>
</dbReference>
<dbReference type="Pfam" id="PF01628">
    <property type="entry name" value="HrcA"/>
    <property type="match status" value="1"/>
</dbReference>
<dbReference type="PIRSF" id="PIRSF005485">
    <property type="entry name" value="HrcA"/>
    <property type="match status" value="1"/>
</dbReference>
<dbReference type="SUPFAM" id="SSF55781">
    <property type="entry name" value="GAF domain-like"/>
    <property type="match status" value="1"/>
</dbReference>
<dbReference type="SUPFAM" id="SSF46785">
    <property type="entry name" value="Winged helix' DNA-binding domain"/>
    <property type="match status" value="1"/>
</dbReference>
<comment type="function">
    <text evidence="1">Negative regulator of class I heat shock genes (grpE-dnaK-dnaJ and groELS operons). Prevents heat-shock induction of these operons.</text>
</comment>
<comment type="similarity">
    <text evidence="1">Belongs to the HrcA family.</text>
</comment>
<sequence>MLSDRKKIILKAVVESYSQKRQPVGSKSLIHLPELQFSSATIRYDMLKLEEEGFLKKNHTSSGRIPSFKGYTYYLTHLLTRDYDAANSFPLIDKVIQNKTFHKNKVIKEAIKLLNSLTSYTAMAIGPDVFNNSKISKIDFIPLNHKQALILIITNKGDVQHQNISLDQTKEISIYDLKDIVKIISDLLVGKYLSEAVKIIQSDFVKQTIAKYIRFQEQLIALFIEAFSSFASENTYFAGISEMTKKKEFSDLELIKKIMNLLERKELLKILLNQEGLSFKLSDELQLTPVKDYMILSIPFAIDANEKGTIAILGPSWMKYPKIIPLLEYLSIHLSKLNQE</sequence>
<protein>
    <recommendedName>
        <fullName evidence="1">Heat-inducible transcription repressor HrcA</fullName>
    </recommendedName>
</protein>
<proteinExistence type="inferred from homology"/>
<gene>
    <name evidence="1" type="primary">hrcA</name>
    <name type="ordered locus">PA0557</name>
</gene>
<accession>B1VAB8</accession>
<evidence type="ECO:0000255" key="1">
    <source>
        <dbReference type="HAMAP-Rule" id="MF_00081"/>
    </source>
</evidence>
<name>HRCA_PHYAS</name>